<name>RNH2_PARM1</name>
<reference key="1">
    <citation type="journal article" date="1995" name="J. Biol. Chem.">
        <title>An iron-regulated gene, magA encoding an iron transport protein of Magnetospirillum sp. strain AMB-1.</title>
        <authorList>
            <person name="Nakamura C."/>
            <person name="Burgess G.J."/>
            <person name="Sode K."/>
            <person name="Matsunaga T."/>
        </authorList>
    </citation>
    <scope>NUCLEOTIDE SEQUENCE [GENOMIC DNA]</scope>
</reference>
<reference key="2">
    <citation type="journal article" date="2005" name="DNA Res.">
        <title>Complete genome sequence of the facultative anaerobic magnetotactic bacterium Magnetospirillum sp. strain AMB-1.</title>
        <authorList>
            <person name="Matsunaga T."/>
            <person name="Okamura Y."/>
            <person name="Fukuda Y."/>
            <person name="Wahyudi A.T."/>
            <person name="Murase Y."/>
            <person name="Takeyama H."/>
        </authorList>
    </citation>
    <scope>NUCLEOTIDE SEQUENCE [LARGE SCALE GENOMIC DNA]</scope>
    <source>
        <strain>ATCC 700264 / AMB-1</strain>
    </source>
</reference>
<proteinExistence type="inferred from homology"/>
<feature type="chain" id="PRO_0000111589" description="Ribonuclease HII">
    <location>
        <begin position="1"/>
        <end position="201"/>
    </location>
</feature>
<feature type="domain" description="RNase H type-2" evidence="2">
    <location>
        <begin position="12"/>
        <end position="201"/>
    </location>
</feature>
<feature type="binding site" evidence="1">
    <location>
        <position position="18"/>
    </location>
    <ligand>
        <name>a divalent metal cation</name>
        <dbReference type="ChEBI" id="CHEBI:60240"/>
    </ligand>
</feature>
<feature type="binding site" evidence="1">
    <location>
        <position position="19"/>
    </location>
    <ligand>
        <name>a divalent metal cation</name>
        <dbReference type="ChEBI" id="CHEBI:60240"/>
    </ligand>
</feature>
<feature type="binding site" evidence="1">
    <location>
        <position position="113"/>
    </location>
    <ligand>
        <name>a divalent metal cation</name>
        <dbReference type="ChEBI" id="CHEBI:60240"/>
    </ligand>
</feature>
<accession>Q50412</accession>
<accession>Q2W032</accession>
<keyword id="KW-0963">Cytoplasm</keyword>
<keyword id="KW-0255">Endonuclease</keyword>
<keyword id="KW-0378">Hydrolase</keyword>
<keyword id="KW-0464">Manganese</keyword>
<keyword id="KW-0479">Metal-binding</keyword>
<keyword id="KW-0540">Nuclease</keyword>
<gene>
    <name type="primary">rnhB</name>
    <name type="ordered locus">amb3989</name>
</gene>
<organism>
    <name type="scientific">Paramagnetospirillum magneticum (strain ATCC 700264 / AMB-1)</name>
    <name type="common">Magnetospirillum magneticum</name>
    <dbReference type="NCBI Taxonomy" id="342108"/>
    <lineage>
        <taxon>Bacteria</taxon>
        <taxon>Pseudomonadati</taxon>
        <taxon>Pseudomonadota</taxon>
        <taxon>Alphaproteobacteria</taxon>
        <taxon>Rhodospirillales</taxon>
        <taxon>Magnetospirillaceae</taxon>
        <taxon>Paramagnetospirillum</taxon>
    </lineage>
</organism>
<sequence>MPDLALEFEIGGIVCGIDEVGRGPLAGPVVAAAVILDPARLPKTLLERLDDSKKLSKRNREELAELVPATAILGFGEASVEEIDRINILQATFLAMRRAYDALGRECAHALVDGNRPPGLPCPVRCVVGGDGISLSIAAASVVAKVRRDAMMADLARAHPEFGWERNAGYGTAEHLDALKRLGPTPHHRRSFAPVAQYMLF</sequence>
<protein>
    <recommendedName>
        <fullName>Ribonuclease HII</fullName>
        <shortName>RNase HII</shortName>
        <ecNumber>3.1.26.4</ecNumber>
    </recommendedName>
</protein>
<evidence type="ECO:0000250" key="1"/>
<evidence type="ECO:0000255" key="2">
    <source>
        <dbReference type="PROSITE-ProRule" id="PRU01319"/>
    </source>
</evidence>
<evidence type="ECO:0000305" key="3"/>
<dbReference type="EC" id="3.1.26.4"/>
<dbReference type="EMBL" id="D32253">
    <property type="protein sequence ID" value="BAA06983.1"/>
    <property type="molecule type" value="Genomic_DNA"/>
</dbReference>
<dbReference type="EMBL" id="AP007255">
    <property type="protein sequence ID" value="BAE52793.1"/>
    <property type="molecule type" value="Genomic_DNA"/>
</dbReference>
<dbReference type="RefSeq" id="WP_011386343.1">
    <property type="nucleotide sequence ID" value="NC_007626.1"/>
</dbReference>
<dbReference type="SMR" id="Q50412"/>
<dbReference type="STRING" id="342108.amb3989"/>
<dbReference type="KEGG" id="mag:amb3989"/>
<dbReference type="HOGENOM" id="CLU_036532_3_2_5"/>
<dbReference type="OrthoDB" id="9803420at2"/>
<dbReference type="Proteomes" id="UP000007058">
    <property type="component" value="Chromosome"/>
</dbReference>
<dbReference type="GO" id="GO:0005737">
    <property type="term" value="C:cytoplasm"/>
    <property type="evidence" value="ECO:0007669"/>
    <property type="project" value="UniProtKB-SubCell"/>
</dbReference>
<dbReference type="GO" id="GO:0032299">
    <property type="term" value="C:ribonuclease H2 complex"/>
    <property type="evidence" value="ECO:0007669"/>
    <property type="project" value="TreeGrafter"/>
</dbReference>
<dbReference type="GO" id="GO:0030145">
    <property type="term" value="F:manganese ion binding"/>
    <property type="evidence" value="ECO:0007669"/>
    <property type="project" value="UniProtKB-UniRule"/>
</dbReference>
<dbReference type="GO" id="GO:0003723">
    <property type="term" value="F:RNA binding"/>
    <property type="evidence" value="ECO:0007669"/>
    <property type="project" value="InterPro"/>
</dbReference>
<dbReference type="GO" id="GO:0004523">
    <property type="term" value="F:RNA-DNA hybrid ribonuclease activity"/>
    <property type="evidence" value="ECO:0007669"/>
    <property type="project" value="UniProtKB-UniRule"/>
</dbReference>
<dbReference type="GO" id="GO:0043137">
    <property type="term" value="P:DNA replication, removal of RNA primer"/>
    <property type="evidence" value="ECO:0007669"/>
    <property type="project" value="TreeGrafter"/>
</dbReference>
<dbReference type="GO" id="GO:0006298">
    <property type="term" value="P:mismatch repair"/>
    <property type="evidence" value="ECO:0007669"/>
    <property type="project" value="TreeGrafter"/>
</dbReference>
<dbReference type="CDD" id="cd07182">
    <property type="entry name" value="RNase_HII_bacteria_HII_like"/>
    <property type="match status" value="1"/>
</dbReference>
<dbReference type="Gene3D" id="3.30.420.10">
    <property type="entry name" value="Ribonuclease H-like superfamily/Ribonuclease H"/>
    <property type="match status" value="1"/>
</dbReference>
<dbReference type="HAMAP" id="MF_00052_B">
    <property type="entry name" value="RNase_HII_B"/>
    <property type="match status" value="1"/>
</dbReference>
<dbReference type="InterPro" id="IPR022898">
    <property type="entry name" value="RNase_HII"/>
</dbReference>
<dbReference type="InterPro" id="IPR001352">
    <property type="entry name" value="RNase_HII/HIII"/>
</dbReference>
<dbReference type="InterPro" id="IPR024567">
    <property type="entry name" value="RNase_HII/HIII_dom"/>
</dbReference>
<dbReference type="InterPro" id="IPR012337">
    <property type="entry name" value="RNaseH-like_sf"/>
</dbReference>
<dbReference type="InterPro" id="IPR036397">
    <property type="entry name" value="RNaseH_sf"/>
</dbReference>
<dbReference type="NCBIfam" id="NF000595">
    <property type="entry name" value="PRK00015.1-3"/>
    <property type="match status" value="1"/>
</dbReference>
<dbReference type="PANTHER" id="PTHR10954">
    <property type="entry name" value="RIBONUCLEASE H2 SUBUNIT A"/>
    <property type="match status" value="1"/>
</dbReference>
<dbReference type="PANTHER" id="PTHR10954:SF18">
    <property type="entry name" value="RIBONUCLEASE HII"/>
    <property type="match status" value="1"/>
</dbReference>
<dbReference type="Pfam" id="PF01351">
    <property type="entry name" value="RNase_HII"/>
    <property type="match status" value="1"/>
</dbReference>
<dbReference type="SUPFAM" id="SSF53098">
    <property type="entry name" value="Ribonuclease H-like"/>
    <property type="match status" value="1"/>
</dbReference>
<dbReference type="PROSITE" id="PS51975">
    <property type="entry name" value="RNASE_H_2"/>
    <property type="match status" value="1"/>
</dbReference>
<comment type="function">
    <text evidence="1">Endonuclease that specifically degrades the RNA of RNA-DNA hybrids.</text>
</comment>
<comment type="catalytic activity">
    <reaction>
        <text>Endonucleolytic cleavage to 5'-phosphomonoester.</text>
        <dbReference type="EC" id="3.1.26.4"/>
    </reaction>
</comment>
<comment type="cofactor">
    <cofactor evidence="1">
        <name>Mn(2+)</name>
        <dbReference type="ChEBI" id="CHEBI:29035"/>
    </cofactor>
    <cofactor evidence="1">
        <name>Mg(2+)</name>
        <dbReference type="ChEBI" id="CHEBI:18420"/>
    </cofactor>
    <text evidence="1">Manganese or magnesium. Binds 1 divalent metal ion per monomer in the absence of substrate. May bind a second metal ion after substrate binding.</text>
</comment>
<comment type="subcellular location">
    <subcellularLocation>
        <location evidence="3">Cytoplasm</location>
    </subcellularLocation>
</comment>
<comment type="similarity">
    <text evidence="3">Belongs to the RNase HII family.</text>
</comment>